<dbReference type="EC" id="3.6.1.9" evidence="1"/>
<dbReference type="EMBL" id="BX640442">
    <property type="protein sequence ID" value="CAE32362.1"/>
    <property type="molecule type" value="Genomic_DNA"/>
</dbReference>
<dbReference type="RefSeq" id="WP_003813200.1">
    <property type="nucleotide sequence ID" value="NC_002927.3"/>
</dbReference>
<dbReference type="SMR" id="Q7WL84"/>
<dbReference type="KEGG" id="bbr:BB1865"/>
<dbReference type="eggNOG" id="COG0424">
    <property type="taxonomic scope" value="Bacteria"/>
</dbReference>
<dbReference type="HOGENOM" id="CLU_040416_2_1_4"/>
<dbReference type="Proteomes" id="UP000001027">
    <property type="component" value="Chromosome"/>
</dbReference>
<dbReference type="GO" id="GO:0005737">
    <property type="term" value="C:cytoplasm"/>
    <property type="evidence" value="ECO:0007669"/>
    <property type="project" value="UniProtKB-SubCell"/>
</dbReference>
<dbReference type="GO" id="GO:0036218">
    <property type="term" value="F:dTTP diphosphatase activity"/>
    <property type="evidence" value="ECO:0007669"/>
    <property type="project" value="RHEA"/>
</dbReference>
<dbReference type="GO" id="GO:0036221">
    <property type="term" value="F:UTP diphosphatase activity"/>
    <property type="evidence" value="ECO:0007669"/>
    <property type="project" value="RHEA"/>
</dbReference>
<dbReference type="GO" id="GO:0009117">
    <property type="term" value="P:nucleotide metabolic process"/>
    <property type="evidence" value="ECO:0007669"/>
    <property type="project" value="UniProtKB-KW"/>
</dbReference>
<dbReference type="CDD" id="cd00555">
    <property type="entry name" value="Maf"/>
    <property type="match status" value="1"/>
</dbReference>
<dbReference type="Gene3D" id="3.90.950.10">
    <property type="match status" value="1"/>
</dbReference>
<dbReference type="HAMAP" id="MF_00528">
    <property type="entry name" value="Maf"/>
    <property type="match status" value="1"/>
</dbReference>
<dbReference type="InterPro" id="IPR029001">
    <property type="entry name" value="ITPase-like_fam"/>
</dbReference>
<dbReference type="InterPro" id="IPR003697">
    <property type="entry name" value="Maf-like"/>
</dbReference>
<dbReference type="NCBIfam" id="TIGR00172">
    <property type="entry name" value="maf"/>
    <property type="match status" value="1"/>
</dbReference>
<dbReference type="PANTHER" id="PTHR43213">
    <property type="entry name" value="BIFUNCTIONAL DTTP/UTP PYROPHOSPHATASE/METHYLTRANSFERASE PROTEIN-RELATED"/>
    <property type="match status" value="1"/>
</dbReference>
<dbReference type="PANTHER" id="PTHR43213:SF5">
    <property type="entry name" value="BIFUNCTIONAL DTTP_UTP PYROPHOSPHATASE_METHYLTRANSFERASE PROTEIN-RELATED"/>
    <property type="match status" value="1"/>
</dbReference>
<dbReference type="Pfam" id="PF02545">
    <property type="entry name" value="Maf"/>
    <property type="match status" value="1"/>
</dbReference>
<dbReference type="PIRSF" id="PIRSF006305">
    <property type="entry name" value="Maf"/>
    <property type="match status" value="1"/>
</dbReference>
<dbReference type="SUPFAM" id="SSF52972">
    <property type="entry name" value="ITPase-like"/>
    <property type="match status" value="1"/>
</dbReference>
<reference key="1">
    <citation type="journal article" date="2003" name="Nat. Genet.">
        <title>Comparative analysis of the genome sequences of Bordetella pertussis, Bordetella parapertussis and Bordetella bronchiseptica.</title>
        <authorList>
            <person name="Parkhill J."/>
            <person name="Sebaihia M."/>
            <person name="Preston A."/>
            <person name="Murphy L.D."/>
            <person name="Thomson N.R."/>
            <person name="Harris D.E."/>
            <person name="Holden M.T.G."/>
            <person name="Churcher C.M."/>
            <person name="Bentley S.D."/>
            <person name="Mungall K.L."/>
            <person name="Cerdeno-Tarraga A.-M."/>
            <person name="Temple L."/>
            <person name="James K.D."/>
            <person name="Harris B."/>
            <person name="Quail M.A."/>
            <person name="Achtman M."/>
            <person name="Atkin R."/>
            <person name="Baker S."/>
            <person name="Basham D."/>
            <person name="Bason N."/>
            <person name="Cherevach I."/>
            <person name="Chillingworth T."/>
            <person name="Collins M."/>
            <person name="Cronin A."/>
            <person name="Davis P."/>
            <person name="Doggett J."/>
            <person name="Feltwell T."/>
            <person name="Goble A."/>
            <person name="Hamlin N."/>
            <person name="Hauser H."/>
            <person name="Holroyd S."/>
            <person name="Jagels K."/>
            <person name="Leather S."/>
            <person name="Moule S."/>
            <person name="Norberczak H."/>
            <person name="O'Neil S."/>
            <person name="Ormond D."/>
            <person name="Price C."/>
            <person name="Rabbinowitsch E."/>
            <person name="Rutter S."/>
            <person name="Sanders M."/>
            <person name="Saunders D."/>
            <person name="Seeger K."/>
            <person name="Sharp S."/>
            <person name="Simmonds M."/>
            <person name="Skelton J."/>
            <person name="Squares R."/>
            <person name="Squares S."/>
            <person name="Stevens K."/>
            <person name="Unwin L."/>
            <person name="Whitehead S."/>
            <person name="Barrell B.G."/>
            <person name="Maskell D.J."/>
        </authorList>
    </citation>
    <scope>NUCLEOTIDE SEQUENCE [LARGE SCALE GENOMIC DNA]</scope>
    <source>
        <strain>ATCC BAA-588 / NCTC 13252 / RB50</strain>
    </source>
</reference>
<gene>
    <name type="ordered locus">BB1865</name>
</gene>
<proteinExistence type="inferred from homology"/>
<name>NTPPA_BORBR</name>
<comment type="function">
    <text evidence="1">Nucleoside triphosphate pyrophosphatase that hydrolyzes dTTP and UTP. May have a dual role in cell division arrest and in preventing the incorporation of modified nucleotides into cellular nucleic acids.</text>
</comment>
<comment type="catalytic activity">
    <reaction evidence="1">
        <text>dTTP + H2O = dTMP + diphosphate + H(+)</text>
        <dbReference type="Rhea" id="RHEA:28534"/>
        <dbReference type="ChEBI" id="CHEBI:15377"/>
        <dbReference type="ChEBI" id="CHEBI:15378"/>
        <dbReference type="ChEBI" id="CHEBI:33019"/>
        <dbReference type="ChEBI" id="CHEBI:37568"/>
        <dbReference type="ChEBI" id="CHEBI:63528"/>
        <dbReference type="EC" id="3.6.1.9"/>
    </reaction>
</comment>
<comment type="catalytic activity">
    <reaction evidence="1">
        <text>UTP + H2O = UMP + diphosphate + H(+)</text>
        <dbReference type="Rhea" id="RHEA:29395"/>
        <dbReference type="ChEBI" id="CHEBI:15377"/>
        <dbReference type="ChEBI" id="CHEBI:15378"/>
        <dbReference type="ChEBI" id="CHEBI:33019"/>
        <dbReference type="ChEBI" id="CHEBI:46398"/>
        <dbReference type="ChEBI" id="CHEBI:57865"/>
        <dbReference type="EC" id="3.6.1.9"/>
    </reaction>
</comment>
<comment type="cofactor">
    <cofactor evidence="1">
        <name>a divalent metal cation</name>
        <dbReference type="ChEBI" id="CHEBI:60240"/>
    </cofactor>
</comment>
<comment type="subcellular location">
    <subcellularLocation>
        <location evidence="1">Cytoplasm</location>
    </subcellularLocation>
</comment>
<comment type="similarity">
    <text evidence="1">Belongs to the Maf family. YhdE subfamily.</text>
</comment>
<keyword id="KW-0963">Cytoplasm</keyword>
<keyword id="KW-0378">Hydrolase</keyword>
<keyword id="KW-0546">Nucleotide metabolism</keyword>
<protein>
    <recommendedName>
        <fullName evidence="1">dTTP/UTP pyrophosphatase</fullName>
        <shortName evidence="1">dTTPase/UTPase</shortName>
        <ecNumber evidence="1">3.6.1.9</ecNumber>
    </recommendedName>
    <alternativeName>
        <fullName evidence="1">Nucleoside triphosphate pyrophosphatase</fullName>
    </alternativeName>
    <alternativeName>
        <fullName evidence="1">Nucleotide pyrophosphatase</fullName>
        <shortName evidence="1">Nucleotide PPase</shortName>
    </alternativeName>
</protein>
<evidence type="ECO:0000255" key="1">
    <source>
        <dbReference type="HAMAP-Rule" id="MF_00528"/>
    </source>
</evidence>
<feature type="chain" id="PRO_0000122993" description="dTTP/UTP pyrophosphatase">
    <location>
        <begin position="1"/>
        <end position="207"/>
    </location>
</feature>
<feature type="active site" description="Proton acceptor" evidence="1">
    <location>
        <position position="87"/>
    </location>
</feature>
<feature type="site" description="Important for substrate specificity" evidence="1">
    <location>
        <position position="21"/>
    </location>
</feature>
<feature type="site" description="Important for substrate specificity" evidence="1">
    <location>
        <position position="88"/>
    </location>
</feature>
<feature type="site" description="Important for substrate specificity" evidence="1">
    <location>
        <position position="170"/>
    </location>
</feature>
<accession>Q7WL84</accession>
<organism>
    <name type="scientific">Bordetella bronchiseptica (strain ATCC BAA-588 / NCTC 13252 / RB50)</name>
    <name type="common">Alcaligenes bronchisepticus</name>
    <dbReference type="NCBI Taxonomy" id="257310"/>
    <lineage>
        <taxon>Bacteria</taxon>
        <taxon>Pseudomonadati</taxon>
        <taxon>Pseudomonadota</taxon>
        <taxon>Betaproteobacteria</taxon>
        <taxon>Burkholderiales</taxon>
        <taxon>Alcaligenaceae</taxon>
        <taxon>Bordetella</taxon>
    </lineage>
</organism>
<sequence length="207" mass="22218">MSDATLAADPPRLYLASASPRRRELLLQIGLTHTVLRVPAPPGEDEPQHPGEAACDYVRRTARDKAERGQAWLHSQQLPDLPLLAADTTVIVDGIVLGKPADRADALRMLAALSGREHEVHTAVALCHQGRLREDVSITRVRMRALEQAELQRYCDSGEPYGKAGAYGIQGLAGAFVSHIAGSYTGVMGLPLYETAALLRSAGIAVP</sequence>